<reference key="1">
    <citation type="journal article" date="2009" name="PLoS Biol.">
        <title>Lineage-specific biology revealed by a finished genome assembly of the mouse.</title>
        <authorList>
            <person name="Church D.M."/>
            <person name="Goodstadt L."/>
            <person name="Hillier L.W."/>
            <person name="Zody M.C."/>
            <person name="Goldstein S."/>
            <person name="She X."/>
            <person name="Bult C.J."/>
            <person name="Agarwala R."/>
            <person name="Cherry J.L."/>
            <person name="DiCuccio M."/>
            <person name="Hlavina W."/>
            <person name="Kapustin Y."/>
            <person name="Meric P."/>
            <person name="Maglott D."/>
            <person name="Birtle Z."/>
            <person name="Marques A.C."/>
            <person name="Graves T."/>
            <person name="Zhou S."/>
            <person name="Teague B."/>
            <person name="Potamousis K."/>
            <person name="Churas C."/>
            <person name="Place M."/>
            <person name="Herschleb J."/>
            <person name="Runnheim R."/>
            <person name="Forrest D."/>
            <person name="Amos-Landgraf J."/>
            <person name="Schwartz D.C."/>
            <person name="Cheng Z."/>
            <person name="Lindblad-Toh K."/>
            <person name="Eichler E.E."/>
            <person name="Ponting C.P."/>
        </authorList>
    </citation>
    <scope>NUCLEOTIDE SEQUENCE [LARGE SCALE GENOMIC DNA]</scope>
    <source>
        <strain>C57BL/6J</strain>
    </source>
</reference>
<reference key="2">
    <citation type="journal article" date="2003" name="DNA Res.">
        <title>Prediction of the coding sequences of mouse homologues of KIAA gene: III. The complete nucleotide sequences of 500 mouse KIAA-homologous cDNAs identified by screening of terminal sequences of cDNA clones randomly sampled from size-fractionated libraries.</title>
        <authorList>
            <person name="Okazaki N."/>
            <person name="Kikuno R."/>
            <person name="Ohara R."/>
            <person name="Inamoto S."/>
            <person name="Koseki H."/>
            <person name="Hiraoka S."/>
            <person name="Saga Y."/>
            <person name="Nagase T."/>
            <person name="Ohara O."/>
            <person name="Koga H."/>
        </authorList>
    </citation>
    <scope>NUCLEOTIDE SEQUENCE [LARGE SCALE MRNA] OF 517-1487 (ISOFORM 1)</scope>
    <source>
        <tissue>Embryonic tail</tissue>
    </source>
</reference>
<reference key="3">
    <citation type="submission" date="2007-04" db="UniProtKB">
        <authorList>
            <person name="Lubec G."/>
            <person name="Kang S.U."/>
        </authorList>
    </citation>
    <scope>PROTEIN SEQUENCE OF 740-747</scope>
    <scope>IDENTIFICATION BY MASS SPECTROMETRY</scope>
    <source>
        <strain>C57BL/6J</strain>
        <tissue>Brain</tissue>
    </source>
</reference>
<reference key="4">
    <citation type="journal article" date="2005" name="Science">
        <title>The transcriptional landscape of the mammalian genome.</title>
        <authorList>
            <person name="Carninci P."/>
            <person name="Kasukawa T."/>
            <person name="Katayama S."/>
            <person name="Gough J."/>
            <person name="Frith M.C."/>
            <person name="Maeda N."/>
            <person name="Oyama R."/>
            <person name="Ravasi T."/>
            <person name="Lenhard B."/>
            <person name="Wells C."/>
            <person name="Kodzius R."/>
            <person name="Shimokawa K."/>
            <person name="Bajic V.B."/>
            <person name="Brenner S.E."/>
            <person name="Batalov S."/>
            <person name="Forrest A.R."/>
            <person name="Zavolan M."/>
            <person name="Davis M.J."/>
            <person name="Wilming L.G."/>
            <person name="Aidinis V."/>
            <person name="Allen J.E."/>
            <person name="Ambesi-Impiombato A."/>
            <person name="Apweiler R."/>
            <person name="Aturaliya R.N."/>
            <person name="Bailey T.L."/>
            <person name="Bansal M."/>
            <person name="Baxter L."/>
            <person name="Beisel K.W."/>
            <person name="Bersano T."/>
            <person name="Bono H."/>
            <person name="Chalk A.M."/>
            <person name="Chiu K.P."/>
            <person name="Choudhary V."/>
            <person name="Christoffels A."/>
            <person name="Clutterbuck D.R."/>
            <person name="Crowe M.L."/>
            <person name="Dalla E."/>
            <person name="Dalrymple B.P."/>
            <person name="de Bono B."/>
            <person name="Della Gatta G."/>
            <person name="di Bernardo D."/>
            <person name="Down T."/>
            <person name="Engstrom P."/>
            <person name="Fagiolini M."/>
            <person name="Faulkner G."/>
            <person name="Fletcher C.F."/>
            <person name="Fukushima T."/>
            <person name="Furuno M."/>
            <person name="Futaki S."/>
            <person name="Gariboldi M."/>
            <person name="Georgii-Hemming P."/>
            <person name="Gingeras T.R."/>
            <person name="Gojobori T."/>
            <person name="Green R.E."/>
            <person name="Gustincich S."/>
            <person name="Harbers M."/>
            <person name="Hayashi Y."/>
            <person name="Hensch T.K."/>
            <person name="Hirokawa N."/>
            <person name="Hill D."/>
            <person name="Huminiecki L."/>
            <person name="Iacono M."/>
            <person name="Ikeo K."/>
            <person name="Iwama A."/>
            <person name="Ishikawa T."/>
            <person name="Jakt M."/>
            <person name="Kanapin A."/>
            <person name="Katoh M."/>
            <person name="Kawasawa Y."/>
            <person name="Kelso J."/>
            <person name="Kitamura H."/>
            <person name="Kitano H."/>
            <person name="Kollias G."/>
            <person name="Krishnan S.P."/>
            <person name="Kruger A."/>
            <person name="Kummerfeld S.K."/>
            <person name="Kurochkin I.V."/>
            <person name="Lareau L.F."/>
            <person name="Lazarevic D."/>
            <person name="Lipovich L."/>
            <person name="Liu J."/>
            <person name="Liuni S."/>
            <person name="McWilliam S."/>
            <person name="Madan Babu M."/>
            <person name="Madera M."/>
            <person name="Marchionni L."/>
            <person name="Matsuda H."/>
            <person name="Matsuzawa S."/>
            <person name="Miki H."/>
            <person name="Mignone F."/>
            <person name="Miyake S."/>
            <person name="Morris K."/>
            <person name="Mottagui-Tabar S."/>
            <person name="Mulder N."/>
            <person name="Nakano N."/>
            <person name="Nakauchi H."/>
            <person name="Ng P."/>
            <person name="Nilsson R."/>
            <person name="Nishiguchi S."/>
            <person name="Nishikawa S."/>
            <person name="Nori F."/>
            <person name="Ohara O."/>
            <person name="Okazaki Y."/>
            <person name="Orlando V."/>
            <person name="Pang K.C."/>
            <person name="Pavan W.J."/>
            <person name="Pavesi G."/>
            <person name="Pesole G."/>
            <person name="Petrovsky N."/>
            <person name="Piazza S."/>
            <person name="Reed J."/>
            <person name="Reid J.F."/>
            <person name="Ring B.Z."/>
            <person name="Ringwald M."/>
            <person name="Rost B."/>
            <person name="Ruan Y."/>
            <person name="Salzberg S.L."/>
            <person name="Sandelin A."/>
            <person name="Schneider C."/>
            <person name="Schoenbach C."/>
            <person name="Sekiguchi K."/>
            <person name="Semple C.A."/>
            <person name="Seno S."/>
            <person name="Sessa L."/>
            <person name="Sheng Y."/>
            <person name="Shibata Y."/>
            <person name="Shimada H."/>
            <person name="Shimada K."/>
            <person name="Silva D."/>
            <person name="Sinclair B."/>
            <person name="Sperling S."/>
            <person name="Stupka E."/>
            <person name="Sugiura K."/>
            <person name="Sultana R."/>
            <person name="Takenaka Y."/>
            <person name="Taki K."/>
            <person name="Tammoja K."/>
            <person name="Tan S.L."/>
            <person name="Tang S."/>
            <person name="Taylor M.S."/>
            <person name="Tegner J."/>
            <person name="Teichmann S.A."/>
            <person name="Ueda H.R."/>
            <person name="van Nimwegen E."/>
            <person name="Verardo R."/>
            <person name="Wei C.L."/>
            <person name="Yagi K."/>
            <person name="Yamanishi H."/>
            <person name="Zabarovsky E."/>
            <person name="Zhu S."/>
            <person name="Zimmer A."/>
            <person name="Hide W."/>
            <person name="Bult C."/>
            <person name="Grimmond S.M."/>
            <person name="Teasdale R.D."/>
            <person name="Liu E.T."/>
            <person name="Brusic V."/>
            <person name="Quackenbush J."/>
            <person name="Wahlestedt C."/>
            <person name="Mattick J.S."/>
            <person name="Hume D.A."/>
            <person name="Kai C."/>
            <person name="Sasaki D."/>
            <person name="Tomaru Y."/>
            <person name="Fukuda S."/>
            <person name="Kanamori-Katayama M."/>
            <person name="Suzuki M."/>
            <person name="Aoki J."/>
            <person name="Arakawa T."/>
            <person name="Iida J."/>
            <person name="Imamura K."/>
            <person name="Itoh M."/>
            <person name="Kato T."/>
            <person name="Kawaji H."/>
            <person name="Kawagashira N."/>
            <person name="Kawashima T."/>
            <person name="Kojima M."/>
            <person name="Kondo S."/>
            <person name="Konno H."/>
            <person name="Nakano K."/>
            <person name="Ninomiya N."/>
            <person name="Nishio T."/>
            <person name="Okada M."/>
            <person name="Plessy C."/>
            <person name="Shibata K."/>
            <person name="Shiraki T."/>
            <person name="Suzuki S."/>
            <person name="Tagami M."/>
            <person name="Waki K."/>
            <person name="Watahiki A."/>
            <person name="Okamura-Oho Y."/>
            <person name="Suzuki H."/>
            <person name="Kawai J."/>
            <person name="Hayashizaki Y."/>
        </authorList>
    </citation>
    <scope>NUCLEOTIDE SEQUENCE [LARGE SCALE MRNA] OF 1015-1487 (ISOFORM 2)</scope>
    <source>
        <strain>C57BL/6J</strain>
        <tissue>Diencephalon</tissue>
    </source>
</reference>
<reference key="5">
    <citation type="journal article" date="2004" name="Genome Res.">
        <title>The status, quality, and expansion of the NIH full-length cDNA project: the Mammalian Gene Collection (MGC).</title>
        <authorList>
            <consortium name="The MGC Project Team"/>
        </authorList>
    </citation>
    <scope>NUCLEOTIDE SEQUENCE [LARGE SCALE MRNA] OF 1256-1487</scope>
    <source>
        <tissue>Retina</tissue>
    </source>
</reference>
<reference key="6">
    <citation type="journal article" date="2007" name="Proc. Natl. Acad. Sci. U.S.A.">
        <title>Large-scale phosphorylation analysis of mouse liver.</title>
        <authorList>
            <person name="Villen J."/>
            <person name="Beausoleil S.A."/>
            <person name="Gerber S.A."/>
            <person name="Gygi S.P."/>
        </authorList>
    </citation>
    <scope>PHOSPHORYLATION [LARGE SCALE ANALYSIS] AT SER-1402 AND SER-1458</scope>
    <scope>IDENTIFICATION BY MASS SPECTROMETRY [LARGE SCALE ANALYSIS]</scope>
    <source>
        <tissue>Liver</tissue>
    </source>
</reference>
<reference key="7">
    <citation type="journal article" date="2009" name="Mol. Cell. Proteomics">
        <title>The mouse C2C12 myoblast cell surface N-linked glycoproteome: identification, glycosite occupancy, and membrane orientation.</title>
        <authorList>
            <person name="Gundry R.L."/>
            <person name="Raginski K."/>
            <person name="Tarasova Y."/>
            <person name="Tchernyshyov I."/>
            <person name="Bausch-Fluck D."/>
            <person name="Elliott S.T."/>
            <person name="Boheler K.R."/>
            <person name="Van Eyk J.E."/>
            <person name="Wollscheid B."/>
        </authorList>
    </citation>
    <scope>GLYCOSYLATION [LARGE SCALE ANALYSIS] AT ASN-735</scope>
    <source>
        <tissue>Myoblast</tissue>
    </source>
</reference>
<reference key="8">
    <citation type="journal article" date="2009" name="Nat. Biotechnol.">
        <title>Mass-spectrometric identification and relative quantification of N-linked cell surface glycoproteins.</title>
        <authorList>
            <person name="Wollscheid B."/>
            <person name="Bausch-Fluck D."/>
            <person name="Henderson C."/>
            <person name="O'Brien R."/>
            <person name="Bibel M."/>
            <person name="Schiess R."/>
            <person name="Aebersold R."/>
            <person name="Watts J.D."/>
        </authorList>
    </citation>
    <scope>GLYCOSYLATION [LARGE SCALE ANALYSIS] AT ASN-735</scope>
</reference>
<reference key="9">
    <citation type="journal article" date="2010" name="Cell">
        <title>A tissue-specific atlas of mouse protein phosphorylation and expression.</title>
        <authorList>
            <person name="Huttlin E.L."/>
            <person name="Jedrychowski M.P."/>
            <person name="Elias J.E."/>
            <person name="Goswami T."/>
            <person name="Rad R."/>
            <person name="Beausoleil S.A."/>
            <person name="Villen J."/>
            <person name="Haas W."/>
            <person name="Sowa M.E."/>
            <person name="Gygi S.P."/>
        </authorList>
    </citation>
    <scope>PHOSPHORYLATION [LARGE SCALE ANALYSIS] AT SER-1437 AND SER-1458</scope>
    <scope>IDENTIFICATION BY MASS SPECTROMETRY [LARGE SCALE ANALYSIS]</scope>
    <source>
        <tissue>Brain</tissue>
        <tissue>Brown adipose tissue</tissue>
        <tissue>Heart</tissue>
        <tissue>Kidney</tissue>
        <tissue>Liver</tissue>
        <tissue>Lung</tissue>
    </source>
</reference>
<reference key="10">
    <citation type="journal article" date="2014" name="J. Biol. Chem.">
        <title>Latrophilins function as heterophilic cell-adhesion molecules by binding to teneurins: regulation by alternative splicing.</title>
        <authorList>
            <person name="Boucard A.A."/>
            <person name="Maxeiner S."/>
            <person name="Suedhof T.C."/>
        </authorList>
    </citation>
    <scope>TISSUE SPECIFICITY</scope>
    <scope>DEVELOPMENTAL STAGE</scope>
    <scope>FUNCTION</scope>
</reference>
<reference key="11">
    <citation type="journal article" date="2017" name="J. Cell Biol.">
        <title>Postsynaptic adhesion GPCR latrophilin-2 mediates target recognition in entorhinal-hippocampal synapse assembly.</title>
        <authorList>
            <person name="Anderson G.R."/>
            <person name="Maxeiner S."/>
            <person name="Sando R."/>
            <person name="Tsetsenis T."/>
            <person name="Malenka R.C."/>
            <person name="Suedhof T.C."/>
        </authorList>
    </citation>
    <scope>FUNCTION</scope>
    <scope>SUBCELLULAR LOCATION</scope>
    <scope>DISRUPTION PHENOTYPE</scope>
    <scope>TISSUE SPECIFICITY</scope>
</reference>
<reference key="12">
    <citation type="journal article" date="2019" name="Science">
        <title>Latrophilin GPCRs direct synapse specificity by coincident binding of FLRTs and teneurins.</title>
        <authorList>
            <person name="Sando R."/>
            <person name="Jiang X."/>
            <person name="Suedhof T.C."/>
        </authorList>
    </citation>
    <scope>FUNCTION</scope>
    <scope>SUBCELLULAR LOCATION</scope>
    <scope>TISSUE SPECIFICITY</scope>
</reference>
<dbReference type="EMBL" id="AC113315">
    <property type="status" value="NOT_ANNOTATED_CDS"/>
    <property type="molecule type" value="Genomic_DNA"/>
</dbReference>
<dbReference type="EMBL" id="AC114679">
    <property type="status" value="NOT_ANNOTATED_CDS"/>
    <property type="molecule type" value="Genomic_DNA"/>
</dbReference>
<dbReference type="EMBL" id="AC138591">
    <property type="status" value="NOT_ANNOTATED_CDS"/>
    <property type="molecule type" value="Genomic_DNA"/>
</dbReference>
<dbReference type="EMBL" id="AK129215">
    <property type="protein sequence ID" value="BAC98025.1"/>
    <property type="molecule type" value="mRNA"/>
</dbReference>
<dbReference type="EMBL" id="AK034430">
    <property type="protein sequence ID" value="BAC28707.1"/>
    <property type="molecule type" value="mRNA"/>
</dbReference>
<dbReference type="EMBL" id="BC034660">
    <property type="protein sequence ID" value="AAH34660.1"/>
    <property type="status" value="ALT_INIT"/>
    <property type="molecule type" value="mRNA"/>
</dbReference>
<dbReference type="CCDS" id="CCDS80059.1">
    <molecule id="Q8JZZ7-1"/>
</dbReference>
<dbReference type="PDB" id="6SKE">
    <property type="method" value="X-ray"/>
    <property type="resolution" value="3.62 A"/>
    <property type="chains" value="B/D=30-137"/>
</dbReference>
<dbReference type="PDBsum" id="6SKE"/>
<dbReference type="SMR" id="Q8JZZ7"/>
<dbReference type="FunCoup" id="Q8JZZ7">
    <property type="interactions" value="659"/>
</dbReference>
<dbReference type="IntAct" id="Q8JZZ7">
    <property type="interactions" value="2"/>
</dbReference>
<dbReference type="MINT" id="Q8JZZ7"/>
<dbReference type="STRING" id="10090.ENSMUSP00000143626"/>
<dbReference type="MEROPS" id="P02.009"/>
<dbReference type="GlyConnect" id="2418">
    <molecule id="Q8JZZ7-2"/>
    <property type="glycosylation" value="4 N-Linked glycans (1 site)"/>
</dbReference>
<dbReference type="GlyCosmos" id="Q8JZZ7">
    <property type="glycosylation" value="4 sites, 4 glycans"/>
</dbReference>
<dbReference type="GlyGen" id="Q8JZZ7">
    <property type="glycosylation" value="6 sites, 7 N-linked glycans (4 sites), 1 O-linked glycan (1 site)"/>
</dbReference>
<dbReference type="iPTMnet" id="Q8JZZ7"/>
<dbReference type="PhosphoSitePlus" id="Q8JZZ7"/>
<dbReference type="SwissPalm" id="Q8JZZ7"/>
<dbReference type="jPOST" id="Q8JZZ7"/>
<dbReference type="PaxDb" id="10090-ENSMUSP00000101734"/>
<dbReference type="PeptideAtlas" id="Q8JZZ7"/>
<dbReference type="ProteomicsDB" id="285774">
    <molecule id="Q8JZZ7-1"/>
</dbReference>
<dbReference type="ProteomicsDB" id="285775">
    <molecule id="Q8JZZ7-2"/>
</dbReference>
<dbReference type="Pumba" id="Q8JZZ7"/>
<dbReference type="Antibodypedia" id="2953">
    <property type="antibodies" value="146 antibodies from 29 providers"/>
</dbReference>
<dbReference type="UCSC" id="uc008rsa.1">
    <molecule id="Q8JZZ7-1"/>
    <property type="organism name" value="mouse"/>
</dbReference>
<dbReference type="UCSC" id="uc008rsb.1">
    <property type="organism name" value="mouse"/>
</dbReference>
<dbReference type="AGR" id="MGI:2139714"/>
<dbReference type="MGI" id="MGI:2139714">
    <property type="gene designation" value="Adgrl2"/>
</dbReference>
<dbReference type="VEuPathDB" id="HostDB:ENSMUSG00000028184"/>
<dbReference type="eggNOG" id="KOG3545">
    <property type="taxonomic scope" value="Eukaryota"/>
</dbReference>
<dbReference type="eggNOG" id="KOG4193">
    <property type="taxonomic scope" value="Eukaryota"/>
</dbReference>
<dbReference type="eggNOG" id="KOG4729">
    <property type="taxonomic scope" value="Eukaryota"/>
</dbReference>
<dbReference type="InParanoid" id="Q8JZZ7"/>
<dbReference type="OrthoDB" id="1100386at2759"/>
<dbReference type="PhylomeDB" id="Q8JZZ7"/>
<dbReference type="TreeFam" id="TF351999"/>
<dbReference type="CD-CODE" id="CE726F99">
    <property type="entry name" value="Postsynaptic density"/>
</dbReference>
<dbReference type="ChiTaRS" id="Adgrl2">
    <property type="organism name" value="mouse"/>
</dbReference>
<dbReference type="PRO" id="PR:Q8JZZ7"/>
<dbReference type="Proteomes" id="UP000000589">
    <property type="component" value="Chromosome 3"/>
</dbReference>
<dbReference type="RNAct" id="Q8JZZ7">
    <property type="molecule type" value="protein"/>
</dbReference>
<dbReference type="Bgee" id="ENSMUSG00000028184">
    <property type="expression patterns" value="Expressed in manus and 225 other cell types or tissues"/>
</dbReference>
<dbReference type="ExpressionAtlas" id="Q8JZZ7">
    <property type="expression patterns" value="baseline and differential"/>
</dbReference>
<dbReference type="GO" id="GO:0098978">
    <property type="term" value="C:glutamatergic synapse"/>
    <property type="evidence" value="ECO:0000314"/>
    <property type="project" value="SynGO"/>
</dbReference>
<dbReference type="GO" id="GO:0045211">
    <property type="term" value="C:postsynaptic membrane"/>
    <property type="evidence" value="ECO:0000314"/>
    <property type="project" value="UniProtKB"/>
</dbReference>
<dbReference type="GO" id="GO:0030246">
    <property type="term" value="F:carbohydrate binding"/>
    <property type="evidence" value="ECO:0007669"/>
    <property type="project" value="InterPro"/>
</dbReference>
<dbReference type="GO" id="GO:0004930">
    <property type="term" value="F:G protein-coupled receptor activity"/>
    <property type="evidence" value="ECO:0007669"/>
    <property type="project" value="UniProtKB-KW"/>
</dbReference>
<dbReference type="GO" id="GO:0007166">
    <property type="term" value="P:cell surface receptor signaling pathway"/>
    <property type="evidence" value="ECO:0007669"/>
    <property type="project" value="InterPro"/>
</dbReference>
<dbReference type="GO" id="GO:1904861">
    <property type="term" value="P:excitatory synapse assembly"/>
    <property type="evidence" value="ECO:0000314"/>
    <property type="project" value="UniProtKB"/>
</dbReference>
<dbReference type="GO" id="GO:0051965">
    <property type="term" value="P:positive regulation of synapse assembly"/>
    <property type="evidence" value="ECO:0000314"/>
    <property type="project" value="MGI"/>
</dbReference>
<dbReference type="GO" id="GO:0009617">
    <property type="term" value="P:response to bacterium"/>
    <property type="evidence" value="ECO:0000270"/>
    <property type="project" value="MGI"/>
</dbReference>
<dbReference type="GO" id="GO:0050808">
    <property type="term" value="P:synapse organization"/>
    <property type="evidence" value="ECO:0000314"/>
    <property type="project" value="SynGO"/>
</dbReference>
<dbReference type="CDD" id="cd22845">
    <property type="entry name" value="Gal_Rha_Lectin_LPHN2"/>
    <property type="match status" value="1"/>
</dbReference>
<dbReference type="FunFam" id="1.20.1070.10:FF:000011">
    <property type="entry name" value="Adhesion G protein-coupled receptor L2"/>
    <property type="match status" value="1"/>
</dbReference>
<dbReference type="FunFam" id="1.25.40.610:FF:000001">
    <property type="entry name" value="Adhesion G protein-coupled receptor L2"/>
    <property type="match status" value="1"/>
</dbReference>
<dbReference type="FunFam" id="2.60.120.740:FF:000001">
    <property type="entry name" value="Adhesion G protein-coupled receptor L2"/>
    <property type="match status" value="1"/>
</dbReference>
<dbReference type="FunFam" id="2.60.220.50:FF:000001">
    <property type="entry name" value="Adhesion G protein-coupled receptor L2"/>
    <property type="match status" value="1"/>
</dbReference>
<dbReference type="FunFam" id="4.10.1240.10:FF:000001">
    <property type="entry name" value="Adhesion G protein-coupled receptor L2"/>
    <property type="match status" value="1"/>
</dbReference>
<dbReference type="Gene3D" id="1.25.40.610">
    <property type="match status" value="1"/>
</dbReference>
<dbReference type="Gene3D" id="2.60.120.740">
    <property type="match status" value="1"/>
</dbReference>
<dbReference type="Gene3D" id="2.60.220.50">
    <property type="match status" value="1"/>
</dbReference>
<dbReference type="Gene3D" id="4.10.1240.10">
    <property type="entry name" value="GPCR, family 2, extracellular hormone receptor domain"/>
    <property type="match status" value="1"/>
</dbReference>
<dbReference type="Gene3D" id="1.20.1070.10">
    <property type="entry name" value="Rhodopsin 7-helix transmembrane proteins"/>
    <property type="match status" value="1"/>
</dbReference>
<dbReference type="InterPro" id="IPR057244">
    <property type="entry name" value="GAIN_B"/>
</dbReference>
<dbReference type="InterPro" id="IPR032471">
    <property type="entry name" value="GAIN_dom_N"/>
</dbReference>
<dbReference type="InterPro" id="IPR046338">
    <property type="entry name" value="GAIN_dom_sf"/>
</dbReference>
<dbReference type="InterPro" id="IPR017981">
    <property type="entry name" value="GPCR_2-like_7TM"/>
</dbReference>
<dbReference type="InterPro" id="IPR036445">
    <property type="entry name" value="GPCR_2_extracell_dom_sf"/>
</dbReference>
<dbReference type="InterPro" id="IPR001879">
    <property type="entry name" value="GPCR_2_extracellular_dom"/>
</dbReference>
<dbReference type="InterPro" id="IPR003924">
    <property type="entry name" value="GPCR_2_latrophilin"/>
</dbReference>
<dbReference type="InterPro" id="IPR003334">
    <property type="entry name" value="GPCR_2_latrophilin_rcpt_C"/>
</dbReference>
<dbReference type="InterPro" id="IPR000832">
    <property type="entry name" value="GPCR_2_secretin-like"/>
</dbReference>
<dbReference type="InterPro" id="IPR017983">
    <property type="entry name" value="GPCR_2_secretin-like_CS"/>
</dbReference>
<dbReference type="InterPro" id="IPR000203">
    <property type="entry name" value="GPS"/>
</dbReference>
<dbReference type="InterPro" id="IPR000922">
    <property type="entry name" value="Lectin_gal-bd_dom"/>
</dbReference>
<dbReference type="InterPro" id="IPR043159">
    <property type="entry name" value="Lectin_gal-bd_sf"/>
</dbReference>
<dbReference type="InterPro" id="IPR003112">
    <property type="entry name" value="Olfac-like_dom"/>
</dbReference>
<dbReference type="PANTHER" id="PTHR12011:SF61">
    <property type="entry name" value="ADHESION G PROTEIN-COUPLED RECEPTOR L2"/>
    <property type="match status" value="1"/>
</dbReference>
<dbReference type="PANTHER" id="PTHR12011">
    <property type="entry name" value="ADHESION G-PROTEIN COUPLED RECEPTOR"/>
    <property type="match status" value="1"/>
</dbReference>
<dbReference type="Pfam" id="PF00002">
    <property type="entry name" value="7tm_2"/>
    <property type="match status" value="1"/>
</dbReference>
<dbReference type="Pfam" id="PF16489">
    <property type="entry name" value="GAIN"/>
    <property type="match status" value="1"/>
</dbReference>
<dbReference type="Pfam" id="PF01825">
    <property type="entry name" value="GPS"/>
    <property type="match status" value="1"/>
</dbReference>
<dbReference type="Pfam" id="PF02793">
    <property type="entry name" value="HRM"/>
    <property type="match status" value="1"/>
</dbReference>
<dbReference type="Pfam" id="PF02354">
    <property type="entry name" value="Latrophilin"/>
    <property type="match status" value="1"/>
</dbReference>
<dbReference type="Pfam" id="PF02191">
    <property type="entry name" value="OLF"/>
    <property type="match status" value="1"/>
</dbReference>
<dbReference type="Pfam" id="PF02140">
    <property type="entry name" value="SUEL_Lectin"/>
    <property type="match status" value="1"/>
</dbReference>
<dbReference type="PRINTS" id="PR00249">
    <property type="entry name" value="GPCRSECRETIN"/>
</dbReference>
<dbReference type="PRINTS" id="PR01444">
    <property type="entry name" value="LATROPHILIN"/>
</dbReference>
<dbReference type="SMART" id="SM00303">
    <property type="entry name" value="GPS"/>
    <property type="match status" value="1"/>
</dbReference>
<dbReference type="SMART" id="SM00008">
    <property type="entry name" value="HormR"/>
    <property type="match status" value="1"/>
</dbReference>
<dbReference type="SMART" id="SM00284">
    <property type="entry name" value="OLF"/>
    <property type="match status" value="1"/>
</dbReference>
<dbReference type="PROSITE" id="PS00650">
    <property type="entry name" value="G_PROTEIN_RECEP_F2_2"/>
    <property type="match status" value="1"/>
</dbReference>
<dbReference type="PROSITE" id="PS50227">
    <property type="entry name" value="G_PROTEIN_RECEP_F2_3"/>
    <property type="match status" value="1"/>
</dbReference>
<dbReference type="PROSITE" id="PS50261">
    <property type="entry name" value="G_PROTEIN_RECEP_F2_4"/>
    <property type="match status" value="1"/>
</dbReference>
<dbReference type="PROSITE" id="PS50221">
    <property type="entry name" value="GAIN_B"/>
    <property type="match status" value="1"/>
</dbReference>
<dbReference type="PROSITE" id="PS51132">
    <property type="entry name" value="OLF"/>
    <property type="match status" value="1"/>
</dbReference>
<dbReference type="PROSITE" id="PS50228">
    <property type="entry name" value="SUEL_LECTIN"/>
    <property type="match status" value="1"/>
</dbReference>
<evidence type="ECO:0000250" key="1">
    <source>
        <dbReference type="UniProtKB" id="Q80TS3"/>
    </source>
</evidence>
<evidence type="ECO:0000250" key="2">
    <source>
        <dbReference type="UniProtKB" id="Q9HAR2"/>
    </source>
</evidence>
<evidence type="ECO:0000255" key="3"/>
<evidence type="ECO:0000255" key="4">
    <source>
        <dbReference type="PROSITE-ProRule" id="PRU00098"/>
    </source>
</evidence>
<evidence type="ECO:0000255" key="5">
    <source>
        <dbReference type="PROSITE-ProRule" id="PRU00260"/>
    </source>
</evidence>
<evidence type="ECO:0000255" key="6">
    <source>
        <dbReference type="PROSITE-ProRule" id="PRU00446"/>
    </source>
</evidence>
<evidence type="ECO:0000256" key="7">
    <source>
        <dbReference type="SAM" id="MobiDB-lite"/>
    </source>
</evidence>
<evidence type="ECO:0000269" key="8">
    <source>
    </source>
</evidence>
<evidence type="ECO:0000269" key="9">
    <source>
    </source>
</evidence>
<evidence type="ECO:0000269" key="10">
    <source>
    </source>
</evidence>
<evidence type="ECO:0000269" key="11">
    <source>
    </source>
</evidence>
<evidence type="ECO:0000269" key="12">
    <source>
    </source>
</evidence>
<evidence type="ECO:0000303" key="13">
    <source>
    </source>
</evidence>
<evidence type="ECO:0000303" key="14">
    <source>
    </source>
</evidence>
<evidence type="ECO:0000303" key="15">
    <source>
    </source>
</evidence>
<evidence type="ECO:0000305" key="16"/>
<evidence type="ECO:0000312" key="17">
    <source>
        <dbReference type="MGI" id="MGI:2139714"/>
    </source>
</evidence>
<evidence type="ECO:0007744" key="18">
    <source>
    </source>
</evidence>
<evidence type="ECO:0007744" key="19">
    <source>
    </source>
</evidence>
<gene>
    <name evidence="17" type="primary">Adgrl2</name>
    <name evidence="13" type="synonym">Kiaa0786</name>
    <name evidence="15" type="synonym">Lphn2</name>
</gene>
<sequence length="1487" mass="166577">MVSSGCRMRSLWFIIIISFSPSTEGFSRAALPFGLVRRELSCEGYSIDLRCPGSDVIMIESANYGRTDDKICDADPFQMENTDCYLPDAFKIMTQRCNNRTQCIVVTGSDVFPDPCPGTYKYLEVQYECVPYSKMLVFVCPGTLKAIVDSPCIYEAEQKSGAWCKDPLQAADKIYFMPWTPYRTDTLIEYASLEDFQNSRQTTTYKLPNRVDGTGFVVYDGAVFFNKERTRNIVKFDLRTRIKSGEAIINYANYHDTSPYRWGGKTDIDLAVDENGLWVIYATEQNNGMIVISQLNPYTLRFEATWETAYDKRAASNAFMICGVLYVVRSVYQDNESEAGKNTIDYIYNTRLSRGEYVDVPFPNQYQYIAAVDYNPRDNQLYVWNNNFILRYSLEFGPPDPAQVPTTAVTITSSAELFKTTISTTSSASQRGPVSSTAAGPQDGSRGTKPPPAVSTTKIPPVTNIFPLPERFCEALDWKGIKWPQTQRGMMVERPCPKGTRGTASYLCMASTGTWNPKGPDLSNCTSHWVNQLAQKIRSGENAASLANELAKHTKGHVFAGDVSSSVRLMEQLVDILDAQLQELKPSEKDSAGRSYNKLQKREKTCRAYLKAIVDTVDNLLRAEALESWKHMNSSEQAHTATMLLDTLEEGAFVLADNLLEPTRVSMPTENIVLEVAVLSTEGQVQDFKFPLGLKGLGSSIQLSANTVKQNSRNGLAKLVFIIYRSLGQFLSTENATIKLGADLMGRNSTIAVNSPVISVSINKESSRVYLTDPVLFTLPHIDPDNYFNANCSFWNYSERTMMGYWSTQGCKLVDTNKTRTTCACSHLTNFAILMAHREIAYKDGVHHLLLTVITWVGIVVSLVCLAICIFTFCFFRGLQSDRNTIHKNLCINLFIAEFIFLIGIDKTKYTIACPVFAGLLHFFFLAAFSWMCLEGVQLYLMLVEVFESEYSRKKYYYVAGYLFPATVVGVSAAIDYKSYGTVQACWLHVDNYFIWSFIGPVTFIILLNIIFLVITLCKMVKHSNTLKPDSSRLENINNYRVCDGYYNTDLPGYEDNKPFIKSWVLGAFALLCLLGLTWSFGLLFVNEETVVMAYLFTAFNAFQGLFIFIFHCALQKKVRKEYGKCFRHWYCCGGLPTESPHSSVKASTTRTSARYSSGTQSRIRRMWNDTVRKQSESSFISGDINSTSTLNQGMTGNYLLTNPLLRPHGTNNPYNTLLAETVVCNAPSAPAFNSPGHSLNNARDTSAMDTLPLNGNFNNSYSLRKADYHDGVQVVDCGLSLNDTAFEKMIISELVHNNLRGGNKTHNLELKLPVKPVIGGSSSEDDAIVADASSLMHGDNPGLEFRHKELEAPLIPQRTHSLLYQPQKKVKPEATDSYVSQLTAEADDHLQSPNRDSLYTSMPNLRDSPYPESSPDMAEDLSPSRRSENEDIYYKSMPNLGAGRHLHMCYQISRGNSDGYIIPINKEGCIPEGDVREGQMQLVTSL</sequence>
<keyword id="KW-0002">3D-structure</keyword>
<keyword id="KW-0025">Alternative splicing</keyword>
<keyword id="KW-1003">Cell membrane</keyword>
<keyword id="KW-0903">Direct protein sequencing</keyword>
<keyword id="KW-1015">Disulfide bond</keyword>
<keyword id="KW-0297">G-protein coupled receptor</keyword>
<keyword id="KW-0325">Glycoprotein</keyword>
<keyword id="KW-0472">Membrane</keyword>
<keyword id="KW-0597">Phosphoprotein</keyword>
<keyword id="KW-0628">Postsynaptic cell membrane</keyword>
<keyword id="KW-0675">Receptor</keyword>
<keyword id="KW-1185">Reference proteome</keyword>
<keyword id="KW-0732">Signal</keyword>
<keyword id="KW-0770">Synapse</keyword>
<keyword id="KW-0807">Transducer</keyword>
<keyword id="KW-0812">Transmembrane</keyword>
<keyword id="KW-1133">Transmembrane helix</keyword>
<protein>
    <recommendedName>
        <fullName>Adhesion G protein-coupled receptor L2</fullName>
    </recommendedName>
    <alternativeName>
        <fullName>Calcium-independent alpha-latrotoxin receptor 2</fullName>
        <shortName>CIRL-2</shortName>
    </alternativeName>
    <alternativeName>
        <fullName evidence="15">Latrophilin-2</fullName>
    </alternativeName>
</protein>
<name>AGRL2_MOUSE</name>
<feature type="signal peptide" evidence="3">
    <location>
        <begin position="1"/>
        <end position="25"/>
    </location>
</feature>
<feature type="chain" id="PRO_0000070343" description="Adhesion G protein-coupled receptor L2">
    <location>
        <begin position="26"/>
        <end position="1487"/>
    </location>
</feature>
<feature type="topological domain" description="Extracellular" evidence="16">
    <location>
        <begin position="26"/>
        <end position="855"/>
    </location>
</feature>
<feature type="transmembrane region" description="Helical; Name=1" evidence="3">
    <location>
        <begin position="856"/>
        <end position="876"/>
    </location>
</feature>
<feature type="topological domain" description="Cytoplasmic" evidence="16">
    <location>
        <begin position="877"/>
        <end position="884"/>
    </location>
</feature>
<feature type="transmembrane region" description="Helical; Name=2" evidence="3">
    <location>
        <begin position="885"/>
        <end position="905"/>
    </location>
</feature>
<feature type="topological domain" description="Extracellular" evidence="16">
    <location>
        <begin position="906"/>
        <end position="911"/>
    </location>
</feature>
<feature type="transmembrane region" description="Helical; Name=3" evidence="3">
    <location>
        <begin position="912"/>
        <end position="932"/>
    </location>
</feature>
<feature type="topological domain" description="Cytoplasmic" evidence="16">
    <location>
        <begin position="933"/>
        <end position="955"/>
    </location>
</feature>
<feature type="transmembrane region" description="Helical; Name=4" evidence="3">
    <location>
        <begin position="956"/>
        <end position="976"/>
    </location>
</feature>
<feature type="topological domain" description="Extracellular" evidence="16">
    <location>
        <begin position="977"/>
        <end position="994"/>
    </location>
</feature>
<feature type="transmembrane region" description="Helical; Name=5" evidence="3">
    <location>
        <begin position="995"/>
        <end position="1015"/>
    </location>
</feature>
<feature type="topological domain" description="Cytoplasmic" evidence="16">
    <location>
        <begin position="1016"/>
        <end position="1064"/>
    </location>
</feature>
<feature type="transmembrane region" description="Helical; Name=6" evidence="3">
    <location>
        <begin position="1065"/>
        <end position="1085"/>
    </location>
</feature>
<feature type="topological domain" description="Extracellular" evidence="16">
    <location>
        <begin position="1086"/>
        <end position="1090"/>
    </location>
</feature>
<feature type="transmembrane region" description="Helical; Name=7" evidence="3">
    <location>
        <begin position="1091"/>
        <end position="1111"/>
    </location>
</feature>
<feature type="domain" description="SUEL-type lectin" evidence="5">
    <location>
        <begin position="41"/>
        <end position="130"/>
    </location>
</feature>
<feature type="domain" description="Olfactomedin-like" evidence="6">
    <location>
        <begin position="139"/>
        <end position="398"/>
    </location>
</feature>
<feature type="domain" description="GAIN-B" evidence="4">
    <location>
        <begin position="663"/>
        <end position="841"/>
    </location>
</feature>
<feature type="region of interest" description="Disordered" evidence="7">
    <location>
        <begin position="423"/>
        <end position="461"/>
    </location>
</feature>
<feature type="region of interest" description="GPS" evidence="4">
    <location>
        <begin position="792"/>
        <end position="841"/>
    </location>
</feature>
<feature type="region of interest" description="Stachel" evidence="4">
    <location>
        <begin position="829"/>
        <end position="841"/>
    </location>
</feature>
<feature type="region of interest" description="Disordered" evidence="7">
    <location>
        <begin position="1386"/>
        <end position="1430"/>
    </location>
</feature>
<feature type="compositionally biased region" description="Polar residues" evidence="7">
    <location>
        <begin position="423"/>
        <end position="439"/>
    </location>
</feature>
<feature type="compositionally biased region" description="Polar residues" evidence="7">
    <location>
        <begin position="1392"/>
        <end position="1404"/>
    </location>
</feature>
<feature type="site" description="Cleavage; by autolysis" evidence="4">
    <location>
        <begin position="828"/>
        <end position="829"/>
    </location>
</feature>
<feature type="modified residue" description="Phosphoserine" evidence="18">
    <location>
        <position position="1402"/>
    </location>
</feature>
<feature type="modified residue" description="Phosphoserine" evidence="19">
    <location>
        <position position="1437"/>
    </location>
</feature>
<feature type="modified residue" description="Phosphoserine" evidence="18 19">
    <location>
        <position position="1458"/>
    </location>
</feature>
<feature type="glycosylation site" description="N-linked (GlcNAc...) asparagine" evidence="3">
    <location>
        <position position="99"/>
    </location>
</feature>
<feature type="glycosylation site" description="N-linked (GlcNAc...) asparagine" evidence="3">
    <location>
        <position position="524"/>
    </location>
</feature>
<feature type="glycosylation site" description="N-linked (GlcNAc...) asparagine" evidence="8 9">
    <location>
        <position position="735"/>
    </location>
</feature>
<feature type="disulfide bond" evidence="4">
    <location>
        <begin position="792"/>
        <end position="823"/>
    </location>
</feature>
<feature type="disulfide bond" evidence="4">
    <location>
        <begin position="811"/>
        <end position="825"/>
    </location>
</feature>
<feature type="splice variant" id="VSP_010110" description="In isoform 2." evidence="14">
    <original>K</original>
    <variation>NNYRVCDGYYNTDLPG</variation>
    <location>
        <position position="1062"/>
    </location>
</feature>
<feature type="splice variant" id="VSP_010111" description="In isoform 2." evidence="14">
    <original>G</original>
    <variation>GMTGNYLLTNPLLRPHGTNNPYNTLLAETVVCNAPSAPAFNSPATYRETR</variation>
    <location>
        <position position="1194"/>
    </location>
</feature>
<proteinExistence type="evidence at protein level"/>
<organism>
    <name type="scientific">Mus musculus</name>
    <name type="common">Mouse</name>
    <dbReference type="NCBI Taxonomy" id="10090"/>
    <lineage>
        <taxon>Eukaryota</taxon>
        <taxon>Metazoa</taxon>
        <taxon>Chordata</taxon>
        <taxon>Craniata</taxon>
        <taxon>Vertebrata</taxon>
        <taxon>Euteleostomi</taxon>
        <taxon>Mammalia</taxon>
        <taxon>Eutheria</taxon>
        <taxon>Euarchontoglires</taxon>
        <taxon>Glires</taxon>
        <taxon>Rodentia</taxon>
        <taxon>Myomorpha</taxon>
        <taxon>Muroidea</taxon>
        <taxon>Muridae</taxon>
        <taxon>Murinae</taxon>
        <taxon>Mus</taxon>
        <taxon>Mus</taxon>
    </lineage>
</organism>
<comment type="function">
    <text evidence="1 10 11 12">Orphan adhesion G-protein coupled receptor (aGPCR), which mediates synapse specificity (PubMed:28972101, PubMed:30792275). Ligand binding causes a conformation change that triggers signaling via guanine nucleotide-binding proteins (G proteins) and modulates the activity of downstream effectors (By similarity). Following G-protein coupled receptor activation, associates with cell adhesion molecules that are expressed at the surface of adjacent cells to direct synapse specificity (PubMed:24273166, PubMed:30792275). Specifically mediates the establishment of perforant-path synapses on CA1-region pyramidal neurons in the hippocampus (PubMed:28972101, PubMed:30792275). Localizes to postsynaptic spines in excitatory synapses in the S.lacunosum-moleculare and interacts with presynaptic cell adhesion molecules, such as teneurins, promoting synapse formation (PubMed:30792275).</text>
</comment>
<comment type="activity regulation">
    <text evidence="2 4">Forms a heterodimer of 2 chains generated by proteolytic processing that remain associated through non-covalent interactions mediated by the GAIN-B domain (By similarity). In the inactivated receptor, the Stachel sequence (also named stalk) is embedded in the GAIN-B domain, where it adopts a beta-strand conformation (By similarity). On activation, the Stachel moves into the 7 transmembrane region and adopts a twisted hook-shaped configuration that forms contacts within the receptor, leading to coupling of a G-alpha protein, which activates signaling (By similarity). The cleaved GAIN-B and N-terminal domains can then dissociate from the rest of the receptor (By similarity).</text>
</comment>
<comment type="subunit">
    <text evidence="4">Heterodimer of 2 chains generated by proteolytic processing; the large extracellular N-terminal fragment and the membrane-bound C-terminal fragment predominantly remain associated and non-covalently linked.</text>
</comment>
<comment type="subcellular location">
    <subcellularLocation>
        <location evidence="11 12">Postsynaptic cell membrane</location>
        <topology evidence="3">Multi-pass membrane protein</topology>
    </subcellularLocation>
</comment>
<comment type="alternative products">
    <event type="alternative splicing"/>
    <isoform>
        <id>Q8JZZ7-1</id>
        <name>1</name>
        <sequence type="displayed"/>
    </isoform>
    <isoform>
        <id>Q8JZZ7-2</id>
        <name>2</name>
        <sequence type="described" ref="VSP_010110 VSP_010111"/>
    </isoform>
</comment>
<comment type="tissue specificity">
    <text evidence="10 11 12">Ubiquitously expressed (PubMed:24273166). In neurons, specifically localizes to dendritic domains of CA1 pyramidal neurons in the S. lacunosummoleculare (PubMed:28972101, PubMed:30792275).</text>
</comment>
<comment type="developmental stage">
    <text evidence="8">Decrease in mRNA levels during postnatal development.</text>
</comment>
<comment type="domain">
    <text evidence="2">The Stachel sequence (also named stalk) in the C-terminal part of the extracellular domain (ECD) functions as a tethered agonist (By similarity). In the inactivated receptor, the Stachel sequence (also named stalk) is embedded in the GAIN-B domain, where it adopts a beta-strand conformation (By similarity). On activation, the Stachel moves into the 7 transmembrane region and adopts a twisted hook-shaped configuration that forms contacts within the receptor, leading to coupling of a G-alpha protein, which activates signaling (By similarity).</text>
</comment>
<comment type="PTM">
    <text evidence="4">Autoproteolytically processed at the GPS region of the GAIN-B domain; this cleavage modulates receptor activity.</text>
</comment>
<comment type="disruption phenotype">
    <text evidence="11">Embryonic lethality (PubMed:28972101). Conditional deletion in the brain selectively decreases spine numbers and impairs synaptic inputs from entorhinal but not Schaffer-collateral afferents (PubMed:28972101). Deletion from the CA1 region increases spatial memory retention but decreased learning of sequential spatial memory tasks (PubMed:28972101).</text>
</comment>
<comment type="similarity">
    <text evidence="16">Belongs to the G-protein coupled receptor 2 family. Adhesion G-protein coupled receptor (ADGR) subfamily.</text>
</comment>
<comment type="sequence caution" evidence="16">
    <conflict type="erroneous initiation">
        <sequence resource="EMBL-CDS" id="AAH34660"/>
    </conflict>
</comment>
<accession>Q8JZZ7</accession>
<accession>E9Q6C7</accession>
<accession>Q8BM90</accession>